<feature type="chain" id="PRO_0000249975" description="Anhydro-N-acetylmuramic acid kinase">
    <location>
        <begin position="1"/>
        <end position="372"/>
    </location>
</feature>
<feature type="binding site" evidence="1">
    <location>
        <begin position="21"/>
        <end position="28"/>
    </location>
    <ligand>
        <name>ATP</name>
        <dbReference type="ChEBI" id="CHEBI:30616"/>
    </ligand>
</feature>
<accession>Q2KV10</accession>
<proteinExistence type="inferred from homology"/>
<evidence type="ECO:0000255" key="1">
    <source>
        <dbReference type="HAMAP-Rule" id="MF_01270"/>
    </source>
</evidence>
<sequence>MTQPINGPDNPGRCFIGLMSGTSMDGVDGVLLRLDGAPHLLASVSLDIPPSLRATLLALNSSGPDELHRAALAANELARLYAQACAQLRQAAPEARVRAIGAHGQTVRHRPDLGYTVQLNAPALLAELSGIDVVADFRSRDVAAGGQGAPLVPPFHDAMFGGRGAPRAVLNLGGIGNVTLLAPGQAPRGFDTGPANVLLDAWCHAHTGKHYDHNGNWAATGSVSKALLHHLLNSEPWFDLPAPKSTGRDLFGLGWLHKHLDSSGLRLSPQDVQATLVELTAQTVARAIASEPIQDLLVCGGGARNPAIMQALARALPCPVAPTDSEGVPGQWVEAMAFAWLAQAFIDRLPAGLPGVTGARGPRVLGALYPAA</sequence>
<gene>
    <name evidence="1" type="primary">anmK</name>
    <name type="ordered locus">BAV2965</name>
</gene>
<protein>
    <recommendedName>
        <fullName evidence="1">Anhydro-N-acetylmuramic acid kinase</fullName>
        <ecNumber evidence="1">2.7.1.170</ecNumber>
    </recommendedName>
    <alternativeName>
        <fullName evidence="1">AnhMurNAc kinase</fullName>
    </alternativeName>
</protein>
<reference key="1">
    <citation type="journal article" date="2006" name="J. Bacteriol.">
        <title>Comparison of the genome sequence of the poultry pathogen Bordetella avium with those of B. bronchiseptica, B. pertussis, and B. parapertussis reveals extensive diversity in surface structures associated with host interaction.</title>
        <authorList>
            <person name="Sebaihia M."/>
            <person name="Preston A."/>
            <person name="Maskell D.J."/>
            <person name="Kuzmiak H."/>
            <person name="Connell T.D."/>
            <person name="King N.D."/>
            <person name="Orndorff P.E."/>
            <person name="Miyamoto D.M."/>
            <person name="Thomson N.R."/>
            <person name="Harris D."/>
            <person name="Goble A."/>
            <person name="Lord A."/>
            <person name="Murphy L."/>
            <person name="Quail M.A."/>
            <person name="Rutter S."/>
            <person name="Squares R."/>
            <person name="Squares S."/>
            <person name="Woodward J."/>
            <person name="Parkhill J."/>
            <person name="Temple L.M."/>
        </authorList>
    </citation>
    <scope>NUCLEOTIDE SEQUENCE [LARGE SCALE GENOMIC DNA]</scope>
    <source>
        <strain>197N</strain>
    </source>
</reference>
<keyword id="KW-0067">ATP-binding</keyword>
<keyword id="KW-0119">Carbohydrate metabolism</keyword>
<keyword id="KW-0418">Kinase</keyword>
<keyword id="KW-0547">Nucleotide-binding</keyword>
<keyword id="KW-1185">Reference proteome</keyword>
<keyword id="KW-0808">Transferase</keyword>
<organism>
    <name type="scientific">Bordetella avium (strain 197N)</name>
    <dbReference type="NCBI Taxonomy" id="360910"/>
    <lineage>
        <taxon>Bacteria</taxon>
        <taxon>Pseudomonadati</taxon>
        <taxon>Pseudomonadota</taxon>
        <taxon>Betaproteobacteria</taxon>
        <taxon>Burkholderiales</taxon>
        <taxon>Alcaligenaceae</taxon>
        <taxon>Bordetella</taxon>
    </lineage>
</organism>
<dbReference type="EC" id="2.7.1.170" evidence="1"/>
<dbReference type="EMBL" id="AM167904">
    <property type="protein sequence ID" value="CAJ50575.1"/>
    <property type="molecule type" value="Genomic_DNA"/>
</dbReference>
<dbReference type="RefSeq" id="WP_012418604.1">
    <property type="nucleotide sequence ID" value="NC_010645.1"/>
</dbReference>
<dbReference type="SMR" id="Q2KV10"/>
<dbReference type="STRING" id="360910.BAV2965"/>
<dbReference type="KEGG" id="bav:BAV2965"/>
<dbReference type="eggNOG" id="COG2377">
    <property type="taxonomic scope" value="Bacteria"/>
</dbReference>
<dbReference type="HOGENOM" id="CLU_038782_0_0_4"/>
<dbReference type="OrthoDB" id="9763949at2"/>
<dbReference type="UniPathway" id="UPA00343"/>
<dbReference type="UniPathway" id="UPA00544"/>
<dbReference type="Proteomes" id="UP000001977">
    <property type="component" value="Chromosome"/>
</dbReference>
<dbReference type="GO" id="GO:0005524">
    <property type="term" value="F:ATP binding"/>
    <property type="evidence" value="ECO:0007669"/>
    <property type="project" value="UniProtKB-UniRule"/>
</dbReference>
<dbReference type="GO" id="GO:0016301">
    <property type="term" value="F:kinase activity"/>
    <property type="evidence" value="ECO:0007669"/>
    <property type="project" value="UniProtKB-KW"/>
</dbReference>
<dbReference type="GO" id="GO:0016773">
    <property type="term" value="F:phosphotransferase activity, alcohol group as acceptor"/>
    <property type="evidence" value="ECO:0007669"/>
    <property type="project" value="UniProtKB-UniRule"/>
</dbReference>
<dbReference type="GO" id="GO:0097175">
    <property type="term" value="P:1,6-anhydro-N-acetyl-beta-muramic acid catabolic process"/>
    <property type="evidence" value="ECO:0007669"/>
    <property type="project" value="UniProtKB-UniRule"/>
</dbReference>
<dbReference type="GO" id="GO:0006040">
    <property type="term" value="P:amino sugar metabolic process"/>
    <property type="evidence" value="ECO:0007669"/>
    <property type="project" value="InterPro"/>
</dbReference>
<dbReference type="GO" id="GO:0009254">
    <property type="term" value="P:peptidoglycan turnover"/>
    <property type="evidence" value="ECO:0007669"/>
    <property type="project" value="UniProtKB-UniRule"/>
</dbReference>
<dbReference type="CDD" id="cd24050">
    <property type="entry name" value="ASKHA_NBD_ANMK"/>
    <property type="match status" value="1"/>
</dbReference>
<dbReference type="Gene3D" id="3.30.420.40">
    <property type="match status" value="2"/>
</dbReference>
<dbReference type="HAMAP" id="MF_01270">
    <property type="entry name" value="AnhMurNAc_kinase"/>
    <property type="match status" value="1"/>
</dbReference>
<dbReference type="InterPro" id="IPR005338">
    <property type="entry name" value="Anhydro_N_Ac-Mur_kinase"/>
</dbReference>
<dbReference type="InterPro" id="IPR043129">
    <property type="entry name" value="ATPase_NBD"/>
</dbReference>
<dbReference type="NCBIfam" id="NF007139">
    <property type="entry name" value="PRK09585.1-3"/>
    <property type="match status" value="1"/>
</dbReference>
<dbReference type="PANTHER" id="PTHR30605">
    <property type="entry name" value="ANHYDRO-N-ACETYLMURAMIC ACID KINASE"/>
    <property type="match status" value="1"/>
</dbReference>
<dbReference type="PANTHER" id="PTHR30605:SF0">
    <property type="entry name" value="ANHYDRO-N-ACETYLMURAMIC ACID KINASE"/>
    <property type="match status" value="1"/>
</dbReference>
<dbReference type="Pfam" id="PF03702">
    <property type="entry name" value="AnmK"/>
    <property type="match status" value="1"/>
</dbReference>
<dbReference type="SUPFAM" id="SSF53067">
    <property type="entry name" value="Actin-like ATPase domain"/>
    <property type="match status" value="1"/>
</dbReference>
<name>ANMK_BORA1</name>
<comment type="function">
    <text evidence="1">Catalyzes the specific phosphorylation of 1,6-anhydro-N-acetylmuramic acid (anhMurNAc) with the simultaneous cleavage of the 1,6-anhydro ring, generating MurNAc-6-P. Is required for the utilization of anhMurNAc either imported from the medium or derived from its own cell wall murein, and thus plays a role in cell wall recycling.</text>
</comment>
<comment type="catalytic activity">
    <reaction evidence="1">
        <text>1,6-anhydro-N-acetyl-beta-muramate + ATP + H2O = N-acetyl-D-muramate 6-phosphate + ADP + H(+)</text>
        <dbReference type="Rhea" id="RHEA:24952"/>
        <dbReference type="ChEBI" id="CHEBI:15377"/>
        <dbReference type="ChEBI" id="CHEBI:15378"/>
        <dbReference type="ChEBI" id="CHEBI:30616"/>
        <dbReference type="ChEBI" id="CHEBI:58690"/>
        <dbReference type="ChEBI" id="CHEBI:58722"/>
        <dbReference type="ChEBI" id="CHEBI:456216"/>
        <dbReference type="EC" id="2.7.1.170"/>
    </reaction>
</comment>
<comment type="pathway">
    <text evidence="1">Amino-sugar metabolism; 1,6-anhydro-N-acetylmuramate degradation.</text>
</comment>
<comment type="pathway">
    <text evidence="1">Cell wall biogenesis; peptidoglycan recycling.</text>
</comment>
<comment type="similarity">
    <text evidence="1">Belongs to the anhydro-N-acetylmuramic acid kinase family.</text>
</comment>